<dbReference type="EMBL" id="EU401851">
    <property type="protein sequence ID" value="ACC77800.1"/>
    <property type="molecule type" value="Genomic_DNA"/>
</dbReference>
<dbReference type="EMBL" id="AY626932">
    <property type="protein sequence ID" value="AAT45408.1"/>
    <property type="molecule type" value="mRNA"/>
</dbReference>
<dbReference type="SMR" id="Q6ITB3"/>
<dbReference type="MEROPS" id="I02.052"/>
<dbReference type="GO" id="GO:0005615">
    <property type="term" value="C:extracellular space"/>
    <property type="evidence" value="ECO:0007669"/>
    <property type="project" value="TreeGrafter"/>
</dbReference>
<dbReference type="GO" id="GO:0004867">
    <property type="term" value="F:serine-type endopeptidase inhibitor activity"/>
    <property type="evidence" value="ECO:0007669"/>
    <property type="project" value="UniProtKB-KW"/>
</dbReference>
<dbReference type="CDD" id="cd22594">
    <property type="entry name" value="Kunitz_textilinin-like"/>
    <property type="match status" value="1"/>
</dbReference>
<dbReference type="FunFam" id="4.10.410.10:FF:000004">
    <property type="entry name" value="Tissue factor pathway inhibitor"/>
    <property type="match status" value="1"/>
</dbReference>
<dbReference type="Gene3D" id="4.10.410.10">
    <property type="entry name" value="Pancreatic trypsin inhibitor Kunitz domain"/>
    <property type="match status" value="1"/>
</dbReference>
<dbReference type="InterPro" id="IPR002223">
    <property type="entry name" value="Kunitz_BPTI"/>
</dbReference>
<dbReference type="InterPro" id="IPR036880">
    <property type="entry name" value="Kunitz_BPTI_sf"/>
</dbReference>
<dbReference type="InterPro" id="IPR020901">
    <property type="entry name" value="Prtase_inh_Kunz-CS"/>
</dbReference>
<dbReference type="InterPro" id="IPR050098">
    <property type="entry name" value="TFPI/VKTCI-like"/>
</dbReference>
<dbReference type="PANTHER" id="PTHR10083">
    <property type="entry name" value="KUNITZ-TYPE PROTEASE INHIBITOR-RELATED"/>
    <property type="match status" value="1"/>
</dbReference>
<dbReference type="PANTHER" id="PTHR10083:SF376">
    <property type="entry name" value="SERINE PEPTIDASE INHIBITOR, KUNITZ TYPE, 3"/>
    <property type="match status" value="1"/>
</dbReference>
<dbReference type="Pfam" id="PF00014">
    <property type="entry name" value="Kunitz_BPTI"/>
    <property type="match status" value="1"/>
</dbReference>
<dbReference type="PRINTS" id="PR00759">
    <property type="entry name" value="BASICPTASE"/>
</dbReference>
<dbReference type="SMART" id="SM00131">
    <property type="entry name" value="KU"/>
    <property type="match status" value="1"/>
</dbReference>
<dbReference type="SUPFAM" id="SSF57362">
    <property type="entry name" value="BPTI-like"/>
    <property type="match status" value="1"/>
</dbReference>
<dbReference type="PROSITE" id="PS00280">
    <property type="entry name" value="BPTI_KUNITZ_1"/>
    <property type="match status" value="1"/>
</dbReference>
<dbReference type="PROSITE" id="PS50279">
    <property type="entry name" value="BPTI_KUNITZ_2"/>
    <property type="match status" value="1"/>
</dbReference>
<reference key="1">
    <citation type="journal article" date="2008" name="Cell. Mol. Life Sci.">
        <title>Common evolution of waprin and Kunitz-like toxin families in Australian venomous snakes.</title>
        <authorList>
            <person name="St Pierre L."/>
            <person name="Earl S.T."/>
            <person name="Filippovich I."/>
            <person name="Sorokina N."/>
            <person name="Masci P.P."/>
            <person name="De Jersey J."/>
            <person name="Lavin M.F."/>
        </authorList>
    </citation>
    <scope>NUCLEOTIDE SEQUENCE [GENOMIC DNA / MRNA]</scope>
    <source>
        <tissue>Venom gland</tissue>
    </source>
</reference>
<accession>Q6ITB3</accession>
<accession>B5L5R3</accession>
<evidence type="ECO:0000250" key="1"/>
<evidence type="ECO:0000255" key="2"/>
<evidence type="ECO:0000255" key="3">
    <source>
        <dbReference type="PROSITE-ProRule" id="PRU00031"/>
    </source>
</evidence>
<evidence type="ECO:0000305" key="4"/>
<proteinExistence type="evidence at transcript level"/>
<name>VKT1_NOTSC</name>
<sequence>MSSGGLLLLLGLLTLWAELTPVSSKDHPEFCELPADSGPCRGILHAFYYHPVHRTCLEFIYGGCYGNANNFKTIDECKRTCAA</sequence>
<organism>
    <name type="scientific">Notechis scutatus scutatus</name>
    <name type="common">Mainland tiger snake</name>
    <name type="synonym">Common tiger snake</name>
    <dbReference type="NCBI Taxonomy" id="70142"/>
    <lineage>
        <taxon>Eukaryota</taxon>
        <taxon>Metazoa</taxon>
        <taxon>Chordata</taxon>
        <taxon>Craniata</taxon>
        <taxon>Vertebrata</taxon>
        <taxon>Euteleostomi</taxon>
        <taxon>Lepidosauria</taxon>
        <taxon>Squamata</taxon>
        <taxon>Bifurcata</taxon>
        <taxon>Unidentata</taxon>
        <taxon>Episquamata</taxon>
        <taxon>Toxicofera</taxon>
        <taxon>Serpentes</taxon>
        <taxon>Colubroidea</taxon>
        <taxon>Elapidae</taxon>
        <taxon>Hydrophiinae</taxon>
        <taxon>Notechis</taxon>
    </lineage>
</organism>
<keyword id="KW-1015">Disulfide bond</keyword>
<keyword id="KW-0646">Protease inhibitor</keyword>
<keyword id="KW-0964">Secreted</keyword>
<keyword id="KW-0722">Serine protease inhibitor</keyword>
<keyword id="KW-0732">Signal</keyword>
<protein>
    <recommendedName>
        <fullName>Kunitz-type serine protease inhibitor tigerin-1</fullName>
    </recommendedName>
</protein>
<comment type="function">
    <text evidence="1">Serine protease inhibitor.</text>
</comment>
<comment type="subcellular location">
    <subcellularLocation>
        <location evidence="1">Secreted</location>
    </subcellularLocation>
</comment>
<comment type="tissue specificity">
    <text>Expressed by the venom gland.</text>
</comment>
<comment type="similarity">
    <text evidence="4">Belongs to the venom Kunitz-type family.</text>
</comment>
<feature type="signal peptide" evidence="2">
    <location>
        <begin position="1"/>
        <end position="24"/>
    </location>
</feature>
<feature type="chain" id="PRO_5000395651" description="Kunitz-type serine protease inhibitor tigerin-1">
    <location>
        <begin position="25"/>
        <end position="83"/>
    </location>
</feature>
<feature type="domain" description="BPTI/Kunitz inhibitor" evidence="3">
    <location>
        <begin position="31"/>
        <end position="81"/>
    </location>
</feature>
<feature type="site" description="Reactive bond for trypsin" evidence="1">
    <location>
        <begin position="41"/>
        <end position="42"/>
    </location>
</feature>
<feature type="disulfide bond" evidence="3">
    <location>
        <begin position="31"/>
        <end position="81"/>
    </location>
</feature>
<feature type="disulfide bond" evidence="3">
    <location>
        <begin position="40"/>
        <end position="64"/>
    </location>
</feature>
<feature type="disulfide bond" evidence="3">
    <location>
        <begin position="56"/>
        <end position="77"/>
    </location>
</feature>